<protein>
    <recommendedName>
        <fullName evidence="1">DNA-directed RNA polymerase subunit Rpo10</fullName>
        <ecNumber evidence="1">2.7.7.6</ecNumber>
    </recommendedName>
    <alternativeName>
        <fullName evidence="1">DNA-directed RNA polymerase subunit N</fullName>
    </alternativeName>
</protein>
<feature type="chain" id="PRO_0000121358" description="DNA-directed RNA polymerase subunit Rpo10">
    <location>
        <begin position="1"/>
        <end position="65"/>
    </location>
</feature>
<feature type="binding site" evidence="1">
    <location>
        <position position="7"/>
    </location>
    <ligand>
        <name>Zn(2+)</name>
        <dbReference type="ChEBI" id="CHEBI:29105"/>
    </ligand>
</feature>
<feature type="binding site" evidence="1">
    <location>
        <position position="10"/>
    </location>
    <ligand>
        <name>Zn(2+)</name>
        <dbReference type="ChEBI" id="CHEBI:29105"/>
    </ligand>
</feature>
<feature type="binding site" evidence="1">
    <location>
        <position position="44"/>
    </location>
    <ligand>
        <name>Zn(2+)</name>
        <dbReference type="ChEBI" id="CHEBI:29105"/>
    </ligand>
</feature>
<feature type="binding site" evidence="1">
    <location>
        <position position="45"/>
    </location>
    <ligand>
        <name>Zn(2+)</name>
        <dbReference type="ChEBI" id="CHEBI:29105"/>
    </ligand>
</feature>
<feature type="turn" evidence="3">
    <location>
        <begin position="8"/>
        <end position="10"/>
    </location>
</feature>
<feature type="helix" evidence="3">
    <location>
        <begin position="15"/>
        <end position="17"/>
    </location>
</feature>
<feature type="helix" evidence="3">
    <location>
        <begin position="18"/>
        <end position="27"/>
    </location>
</feature>
<feature type="helix" evidence="3">
    <location>
        <begin position="31"/>
        <end position="37"/>
    </location>
</feature>
<feature type="helix" evidence="3">
    <location>
        <begin position="43"/>
        <end position="50"/>
    </location>
</feature>
<feature type="turn" evidence="3">
    <location>
        <begin position="57"/>
        <end position="59"/>
    </location>
</feature>
<name>RPO10_PYRFU</name>
<accession>P60292</accession>
<accession>Q9V194</accession>
<reference key="1">
    <citation type="journal article" date="1999" name="Genetics">
        <title>Divergence of the hyperthermophilic archaea Pyrococcus furiosus and P. horikoshii inferred from complete genomic sequences.</title>
        <authorList>
            <person name="Maeder D.L."/>
            <person name="Weiss R.B."/>
            <person name="Dunn D.M."/>
            <person name="Cherry J.L."/>
            <person name="Gonzalez J.M."/>
            <person name="DiRuggiero J."/>
            <person name="Robb F.T."/>
        </authorList>
    </citation>
    <scope>NUCLEOTIDE SEQUENCE [LARGE SCALE GENOMIC DNA]</scope>
    <source>
        <strain>ATCC 43587 / DSM 3638 / JCM 8422 / Vc1</strain>
    </source>
</reference>
<gene>
    <name evidence="1" type="primary">rpo10</name>
    <name evidence="1" type="synonym">rpoN</name>
    <name type="ordered locus">PF1643</name>
</gene>
<dbReference type="EC" id="2.7.7.6" evidence="1"/>
<dbReference type="EMBL" id="AE009950">
    <property type="protein sequence ID" value="AAL81767.1"/>
    <property type="status" value="ALT_INIT"/>
    <property type="molecule type" value="Genomic_DNA"/>
</dbReference>
<dbReference type="RefSeq" id="WP_010867658.1">
    <property type="nucleotide sequence ID" value="NZ_CP023154.1"/>
</dbReference>
<dbReference type="PDB" id="8CRO">
    <property type="method" value="EM"/>
    <property type="resolution" value="3.10 A"/>
    <property type="chains" value="N=1-65"/>
</dbReference>
<dbReference type="PDB" id="8OKI">
    <property type="method" value="EM"/>
    <property type="resolution" value="3.45 A"/>
    <property type="chains" value="N=1-65"/>
</dbReference>
<dbReference type="PDB" id="8ORQ">
    <property type="method" value="EM"/>
    <property type="resolution" value="3.20 A"/>
    <property type="chains" value="N=1-65"/>
</dbReference>
<dbReference type="PDB" id="8P2I">
    <property type="method" value="EM"/>
    <property type="resolution" value="3.40 A"/>
    <property type="chains" value="N=1-65"/>
</dbReference>
<dbReference type="PDB" id="8RBO">
    <property type="method" value="EM"/>
    <property type="resolution" value="3.02 A"/>
    <property type="chains" value="N=1-65"/>
</dbReference>
<dbReference type="PDBsum" id="8CRO"/>
<dbReference type="PDBsum" id="8OKI"/>
<dbReference type="PDBsum" id="8ORQ"/>
<dbReference type="PDBsum" id="8P2I"/>
<dbReference type="PDBsum" id="8RBO"/>
<dbReference type="EMDB" id="EMD-16809"/>
<dbReference type="EMDB" id="EMD-16929"/>
<dbReference type="EMDB" id="EMD-17130"/>
<dbReference type="EMDB" id="EMD-17366"/>
<dbReference type="EMDB" id="EMD-19033"/>
<dbReference type="SMR" id="P60292"/>
<dbReference type="IntAct" id="P60292">
    <property type="interactions" value="1"/>
</dbReference>
<dbReference type="MINT" id="P60292"/>
<dbReference type="STRING" id="186497.PF1643"/>
<dbReference type="PaxDb" id="186497-PF1643"/>
<dbReference type="KEGG" id="pfu:PF1643"/>
<dbReference type="PATRIC" id="fig|186497.12.peg.1709"/>
<dbReference type="eggNOG" id="arCOG04244">
    <property type="taxonomic scope" value="Archaea"/>
</dbReference>
<dbReference type="HOGENOM" id="CLU_143122_2_1_2"/>
<dbReference type="OrthoDB" id="371754at2157"/>
<dbReference type="PhylomeDB" id="P60292"/>
<dbReference type="Proteomes" id="UP000001013">
    <property type="component" value="Chromosome"/>
</dbReference>
<dbReference type="GO" id="GO:0005737">
    <property type="term" value="C:cytoplasm"/>
    <property type="evidence" value="ECO:0007669"/>
    <property type="project" value="UniProtKB-SubCell"/>
</dbReference>
<dbReference type="GO" id="GO:0000428">
    <property type="term" value="C:DNA-directed RNA polymerase complex"/>
    <property type="evidence" value="ECO:0007669"/>
    <property type="project" value="UniProtKB-KW"/>
</dbReference>
<dbReference type="GO" id="GO:0003677">
    <property type="term" value="F:DNA binding"/>
    <property type="evidence" value="ECO:0007669"/>
    <property type="project" value="InterPro"/>
</dbReference>
<dbReference type="GO" id="GO:0003899">
    <property type="term" value="F:DNA-directed RNA polymerase activity"/>
    <property type="evidence" value="ECO:0007669"/>
    <property type="project" value="UniProtKB-UniRule"/>
</dbReference>
<dbReference type="GO" id="GO:0008270">
    <property type="term" value="F:zinc ion binding"/>
    <property type="evidence" value="ECO:0007669"/>
    <property type="project" value="UniProtKB-UniRule"/>
</dbReference>
<dbReference type="GO" id="GO:0006351">
    <property type="term" value="P:DNA-templated transcription"/>
    <property type="evidence" value="ECO:0007669"/>
    <property type="project" value="UniProtKB-UniRule"/>
</dbReference>
<dbReference type="FunFam" id="1.10.10.60:FF:000335">
    <property type="entry name" value="DNA-directed RNA polymerase subunit N, putative"/>
    <property type="match status" value="1"/>
</dbReference>
<dbReference type="Gene3D" id="1.10.10.60">
    <property type="entry name" value="Homeodomain-like"/>
    <property type="match status" value="1"/>
</dbReference>
<dbReference type="HAMAP" id="MF_00250">
    <property type="entry name" value="RNApol_arch_Rpo10"/>
    <property type="match status" value="1"/>
</dbReference>
<dbReference type="InterPro" id="IPR023580">
    <property type="entry name" value="RNA_pol_su_RPB10"/>
</dbReference>
<dbReference type="InterPro" id="IPR020789">
    <property type="entry name" value="RNA_pol_suN_Zn-BS"/>
</dbReference>
<dbReference type="InterPro" id="IPR000268">
    <property type="entry name" value="RPABC5/Rpb10"/>
</dbReference>
<dbReference type="NCBIfam" id="NF003089">
    <property type="entry name" value="PRK04016.1"/>
    <property type="match status" value="1"/>
</dbReference>
<dbReference type="PANTHER" id="PTHR23431:SF3">
    <property type="entry name" value="DNA-DIRECTED RNA POLYMERASES I, II, AND III SUBUNIT RPABC5"/>
    <property type="match status" value="1"/>
</dbReference>
<dbReference type="PANTHER" id="PTHR23431">
    <property type="entry name" value="DNA-DIRECTED RNA POLYMERASES I, II, AND III SUBUNIT RPABC5 FAMILY MEMBER"/>
    <property type="match status" value="1"/>
</dbReference>
<dbReference type="Pfam" id="PF01194">
    <property type="entry name" value="RNA_pol_N"/>
    <property type="match status" value="1"/>
</dbReference>
<dbReference type="PIRSF" id="PIRSF005653">
    <property type="entry name" value="RNA_pol_N/8_sub"/>
    <property type="match status" value="1"/>
</dbReference>
<dbReference type="SUPFAM" id="SSF46924">
    <property type="entry name" value="RNA polymerase subunit RPB10"/>
    <property type="match status" value="1"/>
</dbReference>
<dbReference type="PROSITE" id="PS01112">
    <property type="entry name" value="RNA_POL_N_8KD"/>
    <property type="match status" value="1"/>
</dbReference>
<keyword id="KW-0002">3D-structure</keyword>
<keyword id="KW-0963">Cytoplasm</keyword>
<keyword id="KW-0240">DNA-directed RNA polymerase</keyword>
<keyword id="KW-0479">Metal-binding</keyword>
<keyword id="KW-0548">Nucleotidyltransferase</keyword>
<keyword id="KW-1185">Reference proteome</keyword>
<keyword id="KW-0804">Transcription</keyword>
<keyword id="KW-0808">Transferase</keyword>
<keyword id="KW-0862">Zinc</keyword>
<evidence type="ECO:0000255" key="1">
    <source>
        <dbReference type="HAMAP-Rule" id="MF_00250"/>
    </source>
</evidence>
<evidence type="ECO:0000305" key="2"/>
<evidence type="ECO:0007829" key="3">
    <source>
        <dbReference type="PDB" id="8RBO"/>
    </source>
</evidence>
<proteinExistence type="evidence at protein level"/>
<comment type="function">
    <text evidence="1">DNA-dependent RNA polymerase (RNAP) catalyzes the transcription of DNA into RNA using the four ribonucleoside triphosphates as substrates.</text>
</comment>
<comment type="catalytic activity">
    <reaction evidence="1">
        <text>RNA(n) + a ribonucleoside 5'-triphosphate = RNA(n+1) + diphosphate</text>
        <dbReference type="Rhea" id="RHEA:21248"/>
        <dbReference type="Rhea" id="RHEA-COMP:14527"/>
        <dbReference type="Rhea" id="RHEA-COMP:17342"/>
        <dbReference type="ChEBI" id="CHEBI:33019"/>
        <dbReference type="ChEBI" id="CHEBI:61557"/>
        <dbReference type="ChEBI" id="CHEBI:140395"/>
        <dbReference type="EC" id="2.7.7.6"/>
    </reaction>
</comment>
<comment type="cofactor">
    <cofactor evidence="1">
        <name>Zn(2+)</name>
        <dbReference type="ChEBI" id="CHEBI:29105"/>
    </cofactor>
    <text evidence="1">Binds 1 zinc ion.</text>
</comment>
<comment type="subunit">
    <text evidence="1">Part of the RNA polymerase complex.</text>
</comment>
<comment type="subcellular location">
    <subcellularLocation>
        <location evidence="1">Cytoplasm</location>
    </subcellularLocation>
</comment>
<comment type="similarity">
    <text evidence="1">Belongs to the archaeal Rpo10/eukaryotic RPB10 RNA polymerase subunit family.</text>
</comment>
<comment type="sequence caution" evidence="2">
    <conflict type="erroneous initiation">
        <sequence resource="EMBL-CDS" id="AAL81767"/>
    </conflict>
    <text>Extended N-terminus.</text>
</comment>
<sequence length="65" mass="7787">MIVPVRCFTCGKVIGDKYYEFKRRVEAGEDPEKVLDDLGLERYCCRRMLLSHVELIDDIMHYRVY</sequence>
<organism>
    <name type="scientific">Pyrococcus furiosus (strain ATCC 43587 / DSM 3638 / JCM 8422 / Vc1)</name>
    <dbReference type="NCBI Taxonomy" id="186497"/>
    <lineage>
        <taxon>Archaea</taxon>
        <taxon>Methanobacteriati</taxon>
        <taxon>Methanobacteriota</taxon>
        <taxon>Thermococci</taxon>
        <taxon>Thermococcales</taxon>
        <taxon>Thermococcaceae</taxon>
        <taxon>Pyrococcus</taxon>
    </lineage>
</organism>